<keyword id="KW-0687">Ribonucleoprotein</keyword>
<keyword id="KW-0689">Ribosomal protein</keyword>
<keyword id="KW-0694">RNA-binding</keyword>
<keyword id="KW-0699">rRNA-binding</keyword>
<name>RS3_ACISJ</name>
<protein>
    <recommendedName>
        <fullName evidence="1">Small ribosomal subunit protein uS3</fullName>
    </recommendedName>
    <alternativeName>
        <fullName evidence="3">30S ribosomal protein S3</fullName>
    </alternativeName>
</protein>
<reference key="1">
    <citation type="submission" date="2006-12" db="EMBL/GenBank/DDBJ databases">
        <title>Complete sequence of chromosome 1 of Acidovorax sp. JS42.</title>
        <authorList>
            <person name="Copeland A."/>
            <person name="Lucas S."/>
            <person name="Lapidus A."/>
            <person name="Barry K."/>
            <person name="Detter J.C."/>
            <person name="Glavina del Rio T."/>
            <person name="Dalin E."/>
            <person name="Tice H."/>
            <person name="Pitluck S."/>
            <person name="Chertkov O."/>
            <person name="Brettin T."/>
            <person name="Bruce D."/>
            <person name="Han C."/>
            <person name="Tapia R."/>
            <person name="Gilna P."/>
            <person name="Schmutz J."/>
            <person name="Larimer F."/>
            <person name="Land M."/>
            <person name="Hauser L."/>
            <person name="Kyrpides N."/>
            <person name="Kim E."/>
            <person name="Stahl D."/>
            <person name="Richardson P."/>
        </authorList>
    </citation>
    <scope>NUCLEOTIDE SEQUENCE [LARGE SCALE GENOMIC DNA]</scope>
    <source>
        <strain>JS42</strain>
    </source>
</reference>
<comment type="function">
    <text evidence="1">Binds the lower part of the 30S subunit head. Binds mRNA in the 70S ribosome, positioning it for translation.</text>
</comment>
<comment type="subunit">
    <text evidence="1">Part of the 30S ribosomal subunit. Forms a tight complex with proteins S10 and S14.</text>
</comment>
<comment type="similarity">
    <text evidence="1">Belongs to the universal ribosomal protein uS3 family.</text>
</comment>
<proteinExistence type="inferred from homology"/>
<organism>
    <name type="scientific">Acidovorax sp. (strain JS42)</name>
    <dbReference type="NCBI Taxonomy" id="232721"/>
    <lineage>
        <taxon>Bacteria</taxon>
        <taxon>Pseudomonadati</taxon>
        <taxon>Pseudomonadota</taxon>
        <taxon>Betaproteobacteria</taxon>
        <taxon>Burkholderiales</taxon>
        <taxon>Comamonadaceae</taxon>
        <taxon>Acidovorax</taxon>
    </lineage>
</organism>
<evidence type="ECO:0000255" key="1">
    <source>
        <dbReference type="HAMAP-Rule" id="MF_01309"/>
    </source>
</evidence>
<evidence type="ECO:0000256" key="2">
    <source>
        <dbReference type="SAM" id="MobiDB-lite"/>
    </source>
</evidence>
<evidence type="ECO:0000305" key="3"/>
<feature type="chain" id="PRO_0000293741" description="Small ribosomal subunit protein uS3">
    <location>
        <begin position="1"/>
        <end position="288"/>
    </location>
</feature>
<feature type="domain" description="KH type-2" evidence="1">
    <location>
        <begin position="39"/>
        <end position="107"/>
    </location>
</feature>
<feature type="region of interest" description="Disordered" evidence="2">
    <location>
        <begin position="209"/>
        <end position="288"/>
    </location>
</feature>
<feature type="compositionally biased region" description="Basic and acidic residues" evidence="2">
    <location>
        <begin position="219"/>
        <end position="238"/>
    </location>
</feature>
<feature type="compositionally biased region" description="Low complexity" evidence="2">
    <location>
        <begin position="277"/>
        <end position="288"/>
    </location>
</feature>
<dbReference type="EMBL" id="CP000539">
    <property type="protein sequence ID" value="ABM40538.1"/>
    <property type="molecule type" value="Genomic_DNA"/>
</dbReference>
<dbReference type="SMR" id="A1W2R3"/>
<dbReference type="STRING" id="232721.Ajs_0284"/>
<dbReference type="KEGG" id="ajs:Ajs_0284"/>
<dbReference type="eggNOG" id="COG0092">
    <property type="taxonomic scope" value="Bacteria"/>
</dbReference>
<dbReference type="HOGENOM" id="CLU_058591_0_2_4"/>
<dbReference type="Proteomes" id="UP000000645">
    <property type="component" value="Chromosome"/>
</dbReference>
<dbReference type="GO" id="GO:0022627">
    <property type="term" value="C:cytosolic small ribosomal subunit"/>
    <property type="evidence" value="ECO:0007669"/>
    <property type="project" value="TreeGrafter"/>
</dbReference>
<dbReference type="GO" id="GO:0003729">
    <property type="term" value="F:mRNA binding"/>
    <property type="evidence" value="ECO:0007669"/>
    <property type="project" value="UniProtKB-UniRule"/>
</dbReference>
<dbReference type="GO" id="GO:0019843">
    <property type="term" value="F:rRNA binding"/>
    <property type="evidence" value="ECO:0007669"/>
    <property type="project" value="UniProtKB-UniRule"/>
</dbReference>
<dbReference type="GO" id="GO:0003735">
    <property type="term" value="F:structural constituent of ribosome"/>
    <property type="evidence" value="ECO:0007669"/>
    <property type="project" value="InterPro"/>
</dbReference>
<dbReference type="GO" id="GO:0006412">
    <property type="term" value="P:translation"/>
    <property type="evidence" value="ECO:0007669"/>
    <property type="project" value="UniProtKB-UniRule"/>
</dbReference>
<dbReference type="CDD" id="cd02412">
    <property type="entry name" value="KH-II_30S_S3"/>
    <property type="match status" value="1"/>
</dbReference>
<dbReference type="FunFam" id="3.30.1140.32:FF:000001">
    <property type="entry name" value="30S ribosomal protein S3"/>
    <property type="match status" value="1"/>
</dbReference>
<dbReference type="FunFam" id="3.30.300.20:FF:000001">
    <property type="entry name" value="30S ribosomal protein S3"/>
    <property type="match status" value="1"/>
</dbReference>
<dbReference type="Gene3D" id="3.30.300.20">
    <property type="match status" value="1"/>
</dbReference>
<dbReference type="Gene3D" id="3.30.1140.32">
    <property type="entry name" value="Ribosomal protein S3, C-terminal domain"/>
    <property type="match status" value="1"/>
</dbReference>
<dbReference type="HAMAP" id="MF_01309_B">
    <property type="entry name" value="Ribosomal_uS3_B"/>
    <property type="match status" value="1"/>
</dbReference>
<dbReference type="InterPro" id="IPR004087">
    <property type="entry name" value="KH_dom"/>
</dbReference>
<dbReference type="InterPro" id="IPR015946">
    <property type="entry name" value="KH_dom-like_a/b"/>
</dbReference>
<dbReference type="InterPro" id="IPR004044">
    <property type="entry name" value="KH_dom_type_2"/>
</dbReference>
<dbReference type="InterPro" id="IPR009019">
    <property type="entry name" value="KH_sf_prok-type"/>
</dbReference>
<dbReference type="InterPro" id="IPR036419">
    <property type="entry name" value="Ribosomal_S3_C_sf"/>
</dbReference>
<dbReference type="InterPro" id="IPR005704">
    <property type="entry name" value="Ribosomal_uS3_bac-typ"/>
</dbReference>
<dbReference type="InterPro" id="IPR001351">
    <property type="entry name" value="Ribosomal_uS3_C"/>
</dbReference>
<dbReference type="InterPro" id="IPR018280">
    <property type="entry name" value="Ribosomal_uS3_CS"/>
</dbReference>
<dbReference type="NCBIfam" id="TIGR01009">
    <property type="entry name" value="rpsC_bact"/>
    <property type="match status" value="1"/>
</dbReference>
<dbReference type="PANTHER" id="PTHR11760">
    <property type="entry name" value="30S/40S RIBOSOMAL PROTEIN S3"/>
    <property type="match status" value="1"/>
</dbReference>
<dbReference type="PANTHER" id="PTHR11760:SF19">
    <property type="entry name" value="SMALL RIBOSOMAL SUBUNIT PROTEIN US3C"/>
    <property type="match status" value="1"/>
</dbReference>
<dbReference type="Pfam" id="PF07650">
    <property type="entry name" value="KH_2"/>
    <property type="match status" value="1"/>
</dbReference>
<dbReference type="Pfam" id="PF00189">
    <property type="entry name" value="Ribosomal_S3_C"/>
    <property type="match status" value="1"/>
</dbReference>
<dbReference type="SMART" id="SM00322">
    <property type="entry name" value="KH"/>
    <property type="match status" value="1"/>
</dbReference>
<dbReference type="SUPFAM" id="SSF54814">
    <property type="entry name" value="Prokaryotic type KH domain (KH-domain type II)"/>
    <property type="match status" value="1"/>
</dbReference>
<dbReference type="SUPFAM" id="SSF54821">
    <property type="entry name" value="Ribosomal protein S3 C-terminal domain"/>
    <property type="match status" value="1"/>
</dbReference>
<dbReference type="PROSITE" id="PS50823">
    <property type="entry name" value="KH_TYPE_2"/>
    <property type="match status" value="1"/>
</dbReference>
<dbReference type="PROSITE" id="PS00548">
    <property type="entry name" value="RIBOSOMAL_S3"/>
    <property type="match status" value="1"/>
</dbReference>
<gene>
    <name evidence="1" type="primary">rpsC</name>
    <name type="ordered locus">Ajs_0284</name>
</gene>
<sequence length="288" mass="31519">MGQKIHPTGFRLSVSRNWASRWYASNRDFAGMLAEDIKVREYLKAKLKNAAVSRILIERPAKNARITIFSARPGVVIGKKGEDIENLKKELATRLGVPVAVNIEEVRKPEIDAKLIADSITQQLEKRIMFRRAMKRAMQNAMRLGAQGIKIMSSGRLNGIEIARTEWYREGRVPLHTLRADIDYGTSEAKTTYGVIGVKVWVYKGDTLGRNDLPAAETPRPEEERRPRGPRRDGRPGDRAGAGRGGRRPMGTNAAPADGSDKPAGAGGDSVKRVKSAPAAAAADGKGE</sequence>
<accession>A1W2R3</accession>